<evidence type="ECO:0000250" key="1">
    <source>
        <dbReference type="UniProtKB" id="Q8TCD1"/>
    </source>
</evidence>
<evidence type="ECO:0000256" key="2">
    <source>
        <dbReference type="SAM" id="MobiDB-lite"/>
    </source>
</evidence>
<evidence type="ECO:0000305" key="3"/>
<name>CR032_RAT</name>
<comment type="function">
    <text evidence="1">May activate the NF-kappa-B signaling pathway.</text>
</comment>
<comment type="subunit">
    <text evidence="1">Interacts with DERL1 and AMFR.</text>
</comment>
<comment type="subcellular location">
    <subcellularLocation>
        <location evidence="1">Endoplasmic reticulum</location>
    </subcellularLocation>
    <subcellularLocation>
        <location evidence="1">Lipid droplet</location>
    </subcellularLocation>
</comment>
<comment type="PTM">
    <text evidence="1">Undergoes ER-associated degradation (ERAD).</text>
</comment>
<comment type="similarity">
    <text evidence="3">Belongs to the UPF0729 family.</text>
</comment>
<proteinExistence type="inferred from homology"/>
<feature type="chain" id="PRO_0000365092" description="UPF0729 protein C18orf32 homolog">
    <location>
        <begin position="1"/>
        <end position="72"/>
    </location>
</feature>
<feature type="region of interest" description="Necessary for its localzation to the endoplasmic reticulum and lipid droplets" evidence="1">
    <location>
        <begin position="1"/>
        <end position="33"/>
    </location>
</feature>
<feature type="region of interest" description="Disordered" evidence="2">
    <location>
        <begin position="45"/>
        <end position="72"/>
    </location>
</feature>
<sequence length="72" mass="8169">MVCIPCIVIPVLLWIFKKFLEPYIYPVVSRIWPRKAVQQLDNKNTGKVDCKGADTNGFSTKGPTEVSDKKKD</sequence>
<keyword id="KW-0256">Endoplasmic reticulum</keyword>
<keyword id="KW-0551">Lipid droplet</keyword>
<keyword id="KW-1185">Reference proteome</keyword>
<accession>B1WC88</accession>
<organism>
    <name type="scientific">Rattus norvegicus</name>
    <name type="common">Rat</name>
    <dbReference type="NCBI Taxonomy" id="10116"/>
    <lineage>
        <taxon>Eukaryota</taxon>
        <taxon>Metazoa</taxon>
        <taxon>Chordata</taxon>
        <taxon>Craniata</taxon>
        <taxon>Vertebrata</taxon>
        <taxon>Euteleostomi</taxon>
        <taxon>Mammalia</taxon>
        <taxon>Eutheria</taxon>
        <taxon>Euarchontoglires</taxon>
        <taxon>Glires</taxon>
        <taxon>Rodentia</taxon>
        <taxon>Myomorpha</taxon>
        <taxon>Muroidea</taxon>
        <taxon>Muridae</taxon>
        <taxon>Murinae</taxon>
        <taxon>Rattus</taxon>
    </lineage>
</organism>
<protein>
    <recommendedName>
        <fullName>UPF0729 protein C18orf32 homolog</fullName>
    </recommendedName>
</protein>
<dbReference type="EMBL" id="CH474095">
    <property type="protein sequence ID" value="EDL82866.1"/>
    <property type="molecule type" value="Genomic_DNA"/>
</dbReference>
<dbReference type="EMBL" id="CH474095">
    <property type="protein sequence ID" value="EDL82867.1"/>
    <property type="molecule type" value="Genomic_DNA"/>
</dbReference>
<dbReference type="EMBL" id="BC162045">
    <property type="protein sequence ID" value="AAI62045.1"/>
    <property type="molecule type" value="mRNA"/>
</dbReference>
<dbReference type="RefSeq" id="NP_001166943.1">
    <property type="nucleotide sequence ID" value="NM_001173472.1"/>
</dbReference>
<dbReference type="RefSeq" id="XP_008770385.1">
    <property type="nucleotide sequence ID" value="XM_008772163.3"/>
</dbReference>
<dbReference type="FunCoup" id="B1WC88">
    <property type="interactions" value="968"/>
</dbReference>
<dbReference type="STRING" id="10116.ENSRNOP00000025198"/>
<dbReference type="PhosphoSitePlus" id="B1WC88"/>
<dbReference type="PaxDb" id="10116-ENSRNOP00000025198"/>
<dbReference type="PeptideAtlas" id="B1WC88"/>
<dbReference type="GeneID" id="498886"/>
<dbReference type="KEGG" id="rno:498886"/>
<dbReference type="AGR" id="RGD:1562987"/>
<dbReference type="CTD" id="498886"/>
<dbReference type="RGD" id="1562987">
    <property type="gene designation" value="C18h18orf32"/>
</dbReference>
<dbReference type="eggNOG" id="ENOG502S738">
    <property type="taxonomic scope" value="Eukaryota"/>
</dbReference>
<dbReference type="HOGENOM" id="CLU_191635_0_0_1"/>
<dbReference type="InParanoid" id="B1WC88"/>
<dbReference type="OrthoDB" id="10062823at2759"/>
<dbReference type="PhylomeDB" id="B1WC88"/>
<dbReference type="TreeFam" id="TF324662"/>
<dbReference type="PRO" id="PR:B1WC88"/>
<dbReference type="Proteomes" id="UP000002494">
    <property type="component" value="Chromosome 18"/>
</dbReference>
<dbReference type="Proteomes" id="UP000234681">
    <property type="component" value="Chromosome 18"/>
</dbReference>
<dbReference type="Bgee" id="ENSRNOG00000018676">
    <property type="expression patterns" value="Expressed in cerebellum and 20 other cell types or tissues"/>
</dbReference>
<dbReference type="GO" id="GO:0005783">
    <property type="term" value="C:endoplasmic reticulum"/>
    <property type="evidence" value="ECO:0000250"/>
    <property type="project" value="UniProtKB"/>
</dbReference>
<dbReference type="GO" id="GO:0005811">
    <property type="term" value="C:lipid droplet"/>
    <property type="evidence" value="ECO:0000250"/>
    <property type="project" value="UniProtKB"/>
</dbReference>
<dbReference type="InterPro" id="IPR026776">
    <property type="entry name" value="UPF0729_C18orf32-like"/>
</dbReference>
<dbReference type="PANTHER" id="PTHR13456">
    <property type="entry name" value="UPF0729 PROTEIN C18ORF32"/>
    <property type="match status" value="1"/>
</dbReference>
<dbReference type="PANTHER" id="PTHR13456:SF0">
    <property type="entry name" value="UPF0729 PROTEIN C18ORF32"/>
    <property type="match status" value="1"/>
</dbReference>
<dbReference type="Pfam" id="PF14975">
    <property type="entry name" value="DUF4512"/>
    <property type="match status" value="1"/>
</dbReference>
<reference key="1">
    <citation type="submission" date="2005-09" db="EMBL/GenBank/DDBJ databases">
        <authorList>
            <person name="Mural R.J."/>
            <person name="Adams M.D."/>
            <person name="Myers E.W."/>
            <person name="Smith H.O."/>
            <person name="Venter J.C."/>
        </authorList>
    </citation>
    <scope>NUCLEOTIDE SEQUENCE [LARGE SCALE GENOMIC DNA]</scope>
</reference>
<reference key="2">
    <citation type="journal article" date="2004" name="Genome Res.">
        <title>The status, quality, and expansion of the NIH full-length cDNA project: the Mammalian Gene Collection (MGC).</title>
        <authorList>
            <consortium name="The MGC Project Team"/>
        </authorList>
    </citation>
    <scope>NUCLEOTIDE SEQUENCE [LARGE SCALE MRNA]</scope>
    <source>
        <tissue>Kidney</tissue>
    </source>
</reference>